<evidence type="ECO:0000255" key="1">
    <source>
        <dbReference type="HAMAP-Rule" id="MF_00595"/>
    </source>
</evidence>
<reference key="1">
    <citation type="journal article" date="2011" name="Stand. Genomic Sci.">
        <title>Complete genome sequence of the halophilic and highly halotolerant Chromohalobacter salexigens type strain (1H11(T)).</title>
        <authorList>
            <person name="Copeland A."/>
            <person name="O'Connor K."/>
            <person name="Lucas S."/>
            <person name="Lapidus A."/>
            <person name="Berry K.W."/>
            <person name="Detter J.C."/>
            <person name="Del Rio T.G."/>
            <person name="Hammon N."/>
            <person name="Dalin E."/>
            <person name="Tice H."/>
            <person name="Pitluck S."/>
            <person name="Bruce D."/>
            <person name="Goodwin L."/>
            <person name="Han C."/>
            <person name="Tapia R."/>
            <person name="Saunders E."/>
            <person name="Schmutz J."/>
            <person name="Brettin T."/>
            <person name="Larimer F."/>
            <person name="Land M."/>
            <person name="Hauser L."/>
            <person name="Vargas C."/>
            <person name="Nieto J.J."/>
            <person name="Kyrpides N.C."/>
            <person name="Ivanova N."/>
            <person name="Goker M."/>
            <person name="Klenk H.P."/>
            <person name="Csonka L.N."/>
            <person name="Woyke T."/>
        </authorList>
    </citation>
    <scope>NUCLEOTIDE SEQUENCE [LARGE SCALE GENOMIC DNA]</scope>
    <source>
        <strain>ATCC BAA-138 / DSM 3043 / CIP 106854 / NCIMB 13768 / 1H11</strain>
    </source>
</reference>
<proteinExistence type="inferred from homology"/>
<gene>
    <name evidence="1" type="primary">ppc</name>
    <name type="ordered locus">Csal_1640</name>
</gene>
<name>CAPP_CHRSD</name>
<sequence length="883" mass="99159">MSHDLHESLRDNVRILGDSLGRTIADDLGDGFVDKIETIRGLAKRGRQDDSESRRELIEYLRALPEKDLLPVTRAFNQFLNFSNIAEQHYRARFRRVEDYKPGTQPDLGELLERIRGAGHAPRKLVETLAAMRVELVLTAHPTEVIRRTLIRKYDAIDECLTTMEGATEREEIAARARGRLEELISQAWHTDEIRHERPTPVDEAKWGFAVIENSLWQAVPDFHRELDDLLLASAGERLPLDAAPLRFASWMGGDRDGNPNVTARVTEEVLLLGRWMAADLYARDLLRLKSELSMWKANGALRAEVGSDPEPYRALLKRLLARVEATRDWAKARLDGRPFDSNVAIIETRDQLYAPLLSCYRSLCDVGLDTIANGALLDTLRRVAVFGVSLTKLDIRQEAGRHAQVFDELSDCLGLGHYRDWDEAQRQDFLLEELESPRPLIPRRWDCSAETREVIDTFRVIAREHREALGTYVISMAGQPSDVLAVALLMKEVGGDLQLPIAPLFETLDDLNRAGDVIERLLSLPGYRRMAGDGQEVMIGYSDSAKDAGQLAAAWAQYRAQEQLVGICRQHDVALTLFHGRGGTVGRGGGPAHAAILSQPPGSVNGSLRVTEQGEMIRFKFGQPDIALRSMEIYACAVLEATLLPPPDPEPVWREEMDRLSDIAHRAYVGVVREDPDFVPYFRSVTPESALGRLPLGSRPAKRRQEGGVESLRAIPWIFAWTQTRLMLPAWLGSGEAFATRLDEPGGRERLRDMRARWPFFGTYLDMLEMLLAKADPDIAAYYERRLVDEPALQALGKSLRERLSRLETVLLDILDQDTLLEHTPLIRQAIEVRNPYIDPLHGLQAELLQRNRDADGAISPELSRALMVTMAGIAAGLRNTG</sequence>
<comment type="function">
    <text evidence="1">Forms oxaloacetate, a four-carbon dicarboxylic acid source for the tricarboxylic acid cycle.</text>
</comment>
<comment type="catalytic activity">
    <reaction evidence="1">
        <text>oxaloacetate + phosphate = phosphoenolpyruvate + hydrogencarbonate</text>
        <dbReference type="Rhea" id="RHEA:28370"/>
        <dbReference type="ChEBI" id="CHEBI:16452"/>
        <dbReference type="ChEBI" id="CHEBI:17544"/>
        <dbReference type="ChEBI" id="CHEBI:43474"/>
        <dbReference type="ChEBI" id="CHEBI:58702"/>
        <dbReference type="EC" id="4.1.1.31"/>
    </reaction>
</comment>
<comment type="cofactor">
    <cofactor evidence="1">
        <name>Mg(2+)</name>
        <dbReference type="ChEBI" id="CHEBI:18420"/>
    </cofactor>
</comment>
<comment type="similarity">
    <text evidence="1">Belongs to the PEPCase type 1 family.</text>
</comment>
<feature type="chain" id="PRO_1000072622" description="Phosphoenolpyruvate carboxylase">
    <location>
        <begin position="1"/>
        <end position="883"/>
    </location>
</feature>
<feature type="active site" evidence="1">
    <location>
        <position position="141"/>
    </location>
</feature>
<feature type="active site" evidence="1">
    <location>
        <position position="547"/>
    </location>
</feature>
<dbReference type="EC" id="4.1.1.31" evidence="1"/>
<dbReference type="EMBL" id="CP000285">
    <property type="protein sequence ID" value="ABE58993.1"/>
    <property type="molecule type" value="Genomic_DNA"/>
</dbReference>
<dbReference type="RefSeq" id="WP_011506939.1">
    <property type="nucleotide sequence ID" value="NC_007963.1"/>
</dbReference>
<dbReference type="SMR" id="Q1QX15"/>
<dbReference type="STRING" id="290398.Csal_1640"/>
<dbReference type="GeneID" id="95334371"/>
<dbReference type="KEGG" id="csa:Csal_1640"/>
<dbReference type="eggNOG" id="COG2352">
    <property type="taxonomic scope" value="Bacteria"/>
</dbReference>
<dbReference type="HOGENOM" id="CLU_006557_2_0_6"/>
<dbReference type="OrthoDB" id="9768133at2"/>
<dbReference type="Proteomes" id="UP000000239">
    <property type="component" value="Chromosome"/>
</dbReference>
<dbReference type="GO" id="GO:0005829">
    <property type="term" value="C:cytosol"/>
    <property type="evidence" value="ECO:0007669"/>
    <property type="project" value="TreeGrafter"/>
</dbReference>
<dbReference type="GO" id="GO:0000287">
    <property type="term" value="F:magnesium ion binding"/>
    <property type="evidence" value="ECO:0007669"/>
    <property type="project" value="UniProtKB-UniRule"/>
</dbReference>
<dbReference type="GO" id="GO:0008964">
    <property type="term" value="F:phosphoenolpyruvate carboxylase activity"/>
    <property type="evidence" value="ECO:0007669"/>
    <property type="project" value="UniProtKB-UniRule"/>
</dbReference>
<dbReference type="GO" id="GO:0015977">
    <property type="term" value="P:carbon fixation"/>
    <property type="evidence" value="ECO:0007669"/>
    <property type="project" value="UniProtKB-UniRule"/>
</dbReference>
<dbReference type="GO" id="GO:0006107">
    <property type="term" value="P:oxaloacetate metabolic process"/>
    <property type="evidence" value="ECO:0007669"/>
    <property type="project" value="UniProtKB-UniRule"/>
</dbReference>
<dbReference type="GO" id="GO:0006099">
    <property type="term" value="P:tricarboxylic acid cycle"/>
    <property type="evidence" value="ECO:0007669"/>
    <property type="project" value="InterPro"/>
</dbReference>
<dbReference type="Gene3D" id="1.20.1440.90">
    <property type="entry name" value="Phosphoenolpyruvate/pyruvate domain"/>
    <property type="match status" value="1"/>
</dbReference>
<dbReference type="HAMAP" id="MF_00595">
    <property type="entry name" value="PEPcase_type1"/>
    <property type="match status" value="1"/>
</dbReference>
<dbReference type="InterPro" id="IPR021135">
    <property type="entry name" value="PEP_COase"/>
</dbReference>
<dbReference type="InterPro" id="IPR022805">
    <property type="entry name" value="PEP_COase_bac/pln-type"/>
</dbReference>
<dbReference type="InterPro" id="IPR018129">
    <property type="entry name" value="PEP_COase_Lys_AS"/>
</dbReference>
<dbReference type="InterPro" id="IPR033129">
    <property type="entry name" value="PEPCASE_His_AS"/>
</dbReference>
<dbReference type="InterPro" id="IPR015813">
    <property type="entry name" value="Pyrv/PenolPyrv_kinase-like_dom"/>
</dbReference>
<dbReference type="NCBIfam" id="NF000584">
    <property type="entry name" value="PRK00009.1"/>
    <property type="match status" value="1"/>
</dbReference>
<dbReference type="PANTHER" id="PTHR30523">
    <property type="entry name" value="PHOSPHOENOLPYRUVATE CARBOXYLASE"/>
    <property type="match status" value="1"/>
</dbReference>
<dbReference type="PANTHER" id="PTHR30523:SF6">
    <property type="entry name" value="PHOSPHOENOLPYRUVATE CARBOXYLASE"/>
    <property type="match status" value="1"/>
</dbReference>
<dbReference type="Pfam" id="PF00311">
    <property type="entry name" value="PEPcase"/>
    <property type="match status" value="1"/>
</dbReference>
<dbReference type="PRINTS" id="PR00150">
    <property type="entry name" value="PEPCARBXLASE"/>
</dbReference>
<dbReference type="SUPFAM" id="SSF51621">
    <property type="entry name" value="Phosphoenolpyruvate/pyruvate domain"/>
    <property type="match status" value="1"/>
</dbReference>
<dbReference type="PROSITE" id="PS00781">
    <property type="entry name" value="PEPCASE_1"/>
    <property type="match status" value="1"/>
</dbReference>
<dbReference type="PROSITE" id="PS00393">
    <property type="entry name" value="PEPCASE_2"/>
    <property type="match status" value="1"/>
</dbReference>
<protein>
    <recommendedName>
        <fullName evidence="1">Phosphoenolpyruvate carboxylase</fullName>
        <shortName evidence="1">PEPC</shortName>
        <shortName evidence="1">PEPCase</shortName>
        <ecNumber evidence="1">4.1.1.31</ecNumber>
    </recommendedName>
</protein>
<accession>Q1QX15</accession>
<keyword id="KW-0120">Carbon dioxide fixation</keyword>
<keyword id="KW-0456">Lyase</keyword>
<keyword id="KW-0460">Magnesium</keyword>
<keyword id="KW-1185">Reference proteome</keyword>
<organism>
    <name type="scientific">Chromohalobacter salexigens (strain ATCC BAA-138 / DSM 3043 / CIP 106854 / NCIMB 13768 / 1H11)</name>
    <dbReference type="NCBI Taxonomy" id="290398"/>
    <lineage>
        <taxon>Bacteria</taxon>
        <taxon>Pseudomonadati</taxon>
        <taxon>Pseudomonadota</taxon>
        <taxon>Gammaproteobacteria</taxon>
        <taxon>Oceanospirillales</taxon>
        <taxon>Halomonadaceae</taxon>
        <taxon>Chromohalobacter</taxon>
    </lineage>
</organism>